<name>YG42_SCHPO</name>
<organism>
    <name type="scientific">Schizosaccharomyces pombe (strain 972 / ATCC 24843)</name>
    <name type="common">Fission yeast</name>
    <dbReference type="NCBI Taxonomy" id="284812"/>
    <lineage>
        <taxon>Eukaryota</taxon>
        <taxon>Fungi</taxon>
        <taxon>Dikarya</taxon>
        <taxon>Ascomycota</taxon>
        <taxon>Taphrinomycotina</taxon>
        <taxon>Schizosaccharomycetes</taxon>
        <taxon>Schizosaccharomycetales</taxon>
        <taxon>Schizosaccharomycetaceae</taxon>
        <taxon>Schizosaccharomyces</taxon>
    </lineage>
</organism>
<accession>O60177</accession>
<dbReference type="EC" id="3.6.4.-"/>
<dbReference type="EMBL" id="CU329671">
    <property type="protein sequence ID" value="CAA18870.1"/>
    <property type="molecule type" value="Genomic_DNA"/>
</dbReference>
<dbReference type="PIR" id="T39936">
    <property type="entry name" value="T39936"/>
</dbReference>
<dbReference type="SMR" id="O60177"/>
<dbReference type="BioGRID" id="276992">
    <property type="interactions" value="39"/>
</dbReference>
<dbReference type="FunCoup" id="O60177">
    <property type="interactions" value="418"/>
</dbReference>
<dbReference type="STRING" id="284812.O60177"/>
<dbReference type="iPTMnet" id="O60177"/>
<dbReference type="PaxDb" id="4896-SPBC23E6.02.1"/>
<dbReference type="EnsemblFungi" id="SPBC23E6.02.1">
    <property type="protein sequence ID" value="SPBC23E6.02.1:pep"/>
    <property type="gene ID" value="SPBC23E6.02"/>
</dbReference>
<dbReference type="KEGG" id="spo:2540464"/>
<dbReference type="PomBase" id="SPBC23E6.02"/>
<dbReference type="VEuPathDB" id="FungiDB:SPBC23E6.02"/>
<dbReference type="eggNOG" id="KOG1001">
    <property type="taxonomic scope" value="Eukaryota"/>
</dbReference>
<dbReference type="HOGENOM" id="CLU_000315_2_0_1"/>
<dbReference type="InParanoid" id="O60177"/>
<dbReference type="OMA" id="FGECGHI"/>
<dbReference type="PhylomeDB" id="O60177"/>
<dbReference type="PRO" id="PR:O60177"/>
<dbReference type="Proteomes" id="UP000002485">
    <property type="component" value="Chromosome II"/>
</dbReference>
<dbReference type="GO" id="GO:0000785">
    <property type="term" value="C:chromatin"/>
    <property type="evidence" value="ECO:0000266"/>
    <property type="project" value="PomBase"/>
</dbReference>
<dbReference type="GO" id="GO:0005737">
    <property type="term" value="C:cytoplasm"/>
    <property type="evidence" value="ECO:0000318"/>
    <property type="project" value="GO_Central"/>
</dbReference>
<dbReference type="GO" id="GO:0005634">
    <property type="term" value="C:nucleus"/>
    <property type="evidence" value="ECO:0007005"/>
    <property type="project" value="PomBase"/>
</dbReference>
<dbReference type="GO" id="GO:0005524">
    <property type="term" value="F:ATP binding"/>
    <property type="evidence" value="ECO:0007669"/>
    <property type="project" value="UniProtKB-KW"/>
</dbReference>
<dbReference type="GO" id="GO:0016887">
    <property type="term" value="F:ATP hydrolysis activity"/>
    <property type="evidence" value="ECO:0000305"/>
    <property type="project" value="PomBase"/>
</dbReference>
<dbReference type="GO" id="GO:0008094">
    <property type="term" value="F:ATP-dependent activity, acting on DNA"/>
    <property type="evidence" value="ECO:0000318"/>
    <property type="project" value="GO_Central"/>
</dbReference>
<dbReference type="GO" id="GO:0061995">
    <property type="term" value="F:ATP-dependent protein-DNA complex displacement activity"/>
    <property type="evidence" value="ECO:0000314"/>
    <property type="project" value="PomBase"/>
</dbReference>
<dbReference type="GO" id="GO:0004386">
    <property type="term" value="F:helicase activity"/>
    <property type="evidence" value="ECO:0007669"/>
    <property type="project" value="UniProtKB-KW"/>
</dbReference>
<dbReference type="GO" id="GO:0061630">
    <property type="term" value="F:ubiquitin protein ligase activity"/>
    <property type="evidence" value="ECO:0000255"/>
    <property type="project" value="PomBase"/>
</dbReference>
<dbReference type="GO" id="GO:0008270">
    <property type="term" value="F:zinc ion binding"/>
    <property type="evidence" value="ECO:0000255"/>
    <property type="project" value="PomBase"/>
</dbReference>
<dbReference type="GO" id="GO:0006281">
    <property type="term" value="P:DNA repair"/>
    <property type="evidence" value="ECO:0000315"/>
    <property type="project" value="PomBase"/>
</dbReference>
<dbReference type="GO" id="GO:0000724">
    <property type="term" value="P:double-strand break repair via homologous recombination"/>
    <property type="evidence" value="ECO:0000316"/>
    <property type="project" value="PomBase"/>
</dbReference>
<dbReference type="GO" id="GO:0032435">
    <property type="term" value="P:negative regulation of proteasomal ubiquitin-dependent protein catabolic process"/>
    <property type="evidence" value="ECO:0000314"/>
    <property type="project" value="PomBase"/>
</dbReference>
<dbReference type="CDD" id="cd18008">
    <property type="entry name" value="DEXDc_SHPRH-like"/>
    <property type="match status" value="1"/>
</dbReference>
<dbReference type="CDD" id="cd18793">
    <property type="entry name" value="SF2_C_SNF"/>
    <property type="match status" value="1"/>
</dbReference>
<dbReference type="FunFam" id="3.30.40.10:FF:001612">
    <property type="entry name" value="DNA repair protein rad8"/>
    <property type="match status" value="1"/>
</dbReference>
<dbReference type="FunFam" id="3.40.50.10810:FF:000114">
    <property type="entry name" value="DNA repair protein rad8"/>
    <property type="match status" value="1"/>
</dbReference>
<dbReference type="Gene3D" id="3.40.50.300">
    <property type="entry name" value="P-loop containing nucleotide triphosphate hydrolases"/>
    <property type="match status" value="1"/>
</dbReference>
<dbReference type="Gene3D" id="3.40.50.10810">
    <property type="entry name" value="Tandem AAA-ATPase domain"/>
    <property type="match status" value="1"/>
</dbReference>
<dbReference type="Gene3D" id="3.30.40.10">
    <property type="entry name" value="Zinc/RING finger domain, C3HC4 (zinc finger)"/>
    <property type="match status" value="1"/>
</dbReference>
<dbReference type="InterPro" id="IPR014001">
    <property type="entry name" value="Helicase_ATP-bd"/>
</dbReference>
<dbReference type="InterPro" id="IPR001650">
    <property type="entry name" value="Helicase_C-like"/>
</dbReference>
<dbReference type="InterPro" id="IPR027417">
    <property type="entry name" value="P-loop_NTPase"/>
</dbReference>
<dbReference type="InterPro" id="IPR038718">
    <property type="entry name" value="SNF2-like_sf"/>
</dbReference>
<dbReference type="InterPro" id="IPR049730">
    <property type="entry name" value="SNF2/RAD54-like_C"/>
</dbReference>
<dbReference type="InterPro" id="IPR000330">
    <property type="entry name" value="SNF2_N"/>
</dbReference>
<dbReference type="InterPro" id="IPR050628">
    <property type="entry name" value="SNF2_RAD54_helicase_TF"/>
</dbReference>
<dbReference type="InterPro" id="IPR018957">
    <property type="entry name" value="Znf_C3HC4_RING-type"/>
</dbReference>
<dbReference type="InterPro" id="IPR001841">
    <property type="entry name" value="Znf_RING"/>
</dbReference>
<dbReference type="InterPro" id="IPR013083">
    <property type="entry name" value="Znf_RING/FYVE/PHD"/>
</dbReference>
<dbReference type="InterPro" id="IPR017907">
    <property type="entry name" value="Znf_RING_CS"/>
</dbReference>
<dbReference type="PANTHER" id="PTHR45626:SF49">
    <property type="entry name" value="ATP-DEPENDENT DNA HELICASE"/>
    <property type="match status" value="1"/>
</dbReference>
<dbReference type="PANTHER" id="PTHR45626">
    <property type="entry name" value="TRANSCRIPTION TERMINATION FACTOR 2-RELATED"/>
    <property type="match status" value="1"/>
</dbReference>
<dbReference type="Pfam" id="PF00271">
    <property type="entry name" value="Helicase_C"/>
    <property type="match status" value="1"/>
</dbReference>
<dbReference type="Pfam" id="PF00176">
    <property type="entry name" value="SNF2-rel_dom"/>
    <property type="match status" value="1"/>
</dbReference>
<dbReference type="Pfam" id="PF00097">
    <property type="entry name" value="zf-C3HC4"/>
    <property type="match status" value="1"/>
</dbReference>
<dbReference type="SMART" id="SM00487">
    <property type="entry name" value="DEXDc"/>
    <property type="match status" value="1"/>
</dbReference>
<dbReference type="SMART" id="SM00490">
    <property type="entry name" value="HELICc"/>
    <property type="match status" value="1"/>
</dbReference>
<dbReference type="SMART" id="SM00184">
    <property type="entry name" value="RING"/>
    <property type="match status" value="1"/>
</dbReference>
<dbReference type="SUPFAM" id="SSF52540">
    <property type="entry name" value="P-loop containing nucleoside triphosphate hydrolases"/>
    <property type="match status" value="2"/>
</dbReference>
<dbReference type="SUPFAM" id="SSF57850">
    <property type="entry name" value="RING/U-box"/>
    <property type="match status" value="1"/>
</dbReference>
<dbReference type="PROSITE" id="PS51192">
    <property type="entry name" value="HELICASE_ATP_BIND_1"/>
    <property type="match status" value="1"/>
</dbReference>
<dbReference type="PROSITE" id="PS51194">
    <property type="entry name" value="HELICASE_CTER"/>
    <property type="match status" value="1"/>
</dbReference>
<dbReference type="PROSITE" id="PS00518">
    <property type="entry name" value="ZF_RING_1"/>
    <property type="match status" value="1"/>
</dbReference>
<dbReference type="PROSITE" id="PS50089">
    <property type="entry name" value="ZF_RING_2"/>
    <property type="match status" value="1"/>
</dbReference>
<gene>
    <name type="ORF">SPBC23E6.02</name>
</gene>
<evidence type="ECO:0000255" key="1">
    <source>
        <dbReference type="PROSITE-ProRule" id="PRU00175"/>
    </source>
</evidence>
<evidence type="ECO:0000255" key="2">
    <source>
        <dbReference type="PROSITE-ProRule" id="PRU00541"/>
    </source>
</evidence>
<evidence type="ECO:0000255" key="3">
    <source>
        <dbReference type="PROSITE-ProRule" id="PRU00542"/>
    </source>
</evidence>
<evidence type="ECO:0000269" key="4">
    <source>
    </source>
</evidence>
<evidence type="ECO:0000305" key="5"/>
<proteinExistence type="inferred from homology"/>
<protein>
    <recommendedName>
        <fullName>Uncharacterized ATP-dependent helicase C23E6.02</fullName>
        <ecNumber>3.6.4.-</ecNumber>
    </recommendedName>
</protein>
<feature type="chain" id="PRO_0000310787" description="Uncharacterized ATP-dependent helicase C23E6.02">
    <location>
        <begin position="1"/>
        <end position="1040"/>
    </location>
</feature>
<feature type="domain" description="Helicase ATP-binding" evidence="2">
    <location>
        <begin position="403"/>
        <end position="588"/>
    </location>
</feature>
<feature type="domain" description="Helicase C-terminal" evidence="3">
    <location>
        <begin position="866"/>
        <end position="1032"/>
    </location>
</feature>
<feature type="zinc finger region" description="RING-type" evidence="1">
    <location>
        <begin position="746"/>
        <end position="798"/>
    </location>
</feature>
<feature type="binding site" evidence="2">
    <location>
        <begin position="416"/>
        <end position="423"/>
    </location>
    <ligand>
        <name>ATP</name>
        <dbReference type="ChEBI" id="CHEBI:30616"/>
    </ligand>
</feature>
<sequence length="1040" mass="118365">MRNNTAFEQFTLNPCEQIPLDDKHNIGFNKNNTPDYSSSASSDQLLKNDINRHEMERRIAFLNRKQALFNAFMHDSSSSLNTMESNIEKVNGLFPNDNSVIALKPNEEKLNSSLSVENNDSTYTDATLIAPKIGLDRPNINAITIDVDGHSLQNEISSSTDKLSPSQSDALFEQKQDSLFWNDNAVIVVSDSESDDNNVRTKSSLNDHDKVNMKEKRNLELAFMNSKRKKLELPSLPVLSTAGPSYTNSLALPPFHHHNNYKMFNTTHTLEDDKFLQGKGTSNNPISLSDEEDNEINFQNKRYGSDSVILPGGLLHDSKLPEPGKHLFHLQWYHDRFHNIEGFNLSDSNNQKVQDDQQQQLEELFKDLDEQLVNDPTIREGTPAGLIPTLMEHQKEGLMWLKRLEESSKKGGILADDMGLGKTVQALALLVTRPPESKSVKTTLIITPVSLLQQWHNEILTKIAPSHRPTVYIHHGSSKKHKIAEQLMSYDIVLTTYNVIAYEFKNKMAYDKSIEDNAPIKKFEHLPFFEAEWYRVILDEAQTIKNRNTLAARGCCLLESTYRWCLSGTPMQNGVEEFYSLIKFLRIKPYSDWSSFSKDFTIPLSSNINTSAPMKRFRGLLKAVLLRRTKNTKIDGKPILTLPPKTAVKSETDLSSSEMEFYNTLQSGAQIQMRKYLQEGTITTHYGSLLVLLLRLRQACCHPWLIVAREAAVDDNDSFQAKNRAIYNQIYPEAVNRLKLIETLQCSLCMDVVAELLIIVPCGHFLCRECLTHVITSSEDMAKQTSNENISPKCSVCEEYIDTERLLSYALFRRYSGMAPIVDADNKLRTENISELLPKQYSNILENRQMGMKIFTDPKHWTTSTKIEKALNAVKEIIKKQPTDKILIFSQFVSFLELFTVPFRQEGIKYLMYTGGLSTAERNQALINFEVDPNVRVLLISLKAGNVGLNLTCANHVIILDPFWNPYIEEQAVDRAHRIGQDKPVNILRIVTNNTIEERVLALQDRKRELIDSALGEKGLREISRLNTKELSFLFGMSSR</sequence>
<comment type="subcellular location">
    <subcellularLocation>
        <location evidence="4">Nucleus</location>
    </subcellularLocation>
</comment>
<comment type="similarity">
    <text evidence="5">Belongs to the SNF2/RAD54 helicase family.</text>
</comment>
<keyword id="KW-0067">ATP-binding</keyword>
<keyword id="KW-0347">Helicase</keyword>
<keyword id="KW-0378">Hydrolase</keyword>
<keyword id="KW-0479">Metal-binding</keyword>
<keyword id="KW-0547">Nucleotide-binding</keyword>
<keyword id="KW-0539">Nucleus</keyword>
<keyword id="KW-1185">Reference proteome</keyword>
<keyword id="KW-0862">Zinc</keyword>
<keyword id="KW-0863">Zinc-finger</keyword>
<reference key="1">
    <citation type="journal article" date="2002" name="Nature">
        <title>The genome sequence of Schizosaccharomyces pombe.</title>
        <authorList>
            <person name="Wood V."/>
            <person name="Gwilliam R."/>
            <person name="Rajandream M.A."/>
            <person name="Lyne M.H."/>
            <person name="Lyne R."/>
            <person name="Stewart A."/>
            <person name="Sgouros J.G."/>
            <person name="Peat N."/>
            <person name="Hayles J."/>
            <person name="Baker S.G."/>
            <person name="Basham D."/>
            <person name="Bowman S."/>
            <person name="Brooks K."/>
            <person name="Brown D."/>
            <person name="Brown S."/>
            <person name="Chillingworth T."/>
            <person name="Churcher C.M."/>
            <person name="Collins M."/>
            <person name="Connor R."/>
            <person name="Cronin A."/>
            <person name="Davis P."/>
            <person name="Feltwell T."/>
            <person name="Fraser A."/>
            <person name="Gentles S."/>
            <person name="Goble A."/>
            <person name="Hamlin N."/>
            <person name="Harris D.E."/>
            <person name="Hidalgo J."/>
            <person name="Hodgson G."/>
            <person name="Holroyd S."/>
            <person name="Hornsby T."/>
            <person name="Howarth S."/>
            <person name="Huckle E.J."/>
            <person name="Hunt S."/>
            <person name="Jagels K."/>
            <person name="James K.D."/>
            <person name="Jones L."/>
            <person name="Jones M."/>
            <person name="Leather S."/>
            <person name="McDonald S."/>
            <person name="McLean J."/>
            <person name="Mooney P."/>
            <person name="Moule S."/>
            <person name="Mungall K.L."/>
            <person name="Murphy L.D."/>
            <person name="Niblett D."/>
            <person name="Odell C."/>
            <person name="Oliver K."/>
            <person name="O'Neil S."/>
            <person name="Pearson D."/>
            <person name="Quail M.A."/>
            <person name="Rabbinowitsch E."/>
            <person name="Rutherford K.M."/>
            <person name="Rutter S."/>
            <person name="Saunders D."/>
            <person name="Seeger K."/>
            <person name="Sharp S."/>
            <person name="Skelton J."/>
            <person name="Simmonds M.N."/>
            <person name="Squares R."/>
            <person name="Squares S."/>
            <person name="Stevens K."/>
            <person name="Taylor K."/>
            <person name="Taylor R.G."/>
            <person name="Tivey A."/>
            <person name="Walsh S.V."/>
            <person name="Warren T."/>
            <person name="Whitehead S."/>
            <person name="Woodward J.R."/>
            <person name="Volckaert G."/>
            <person name="Aert R."/>
            <person name="Robben J."/>
            <person name="Grymonprez B."/>
            <person name="Weltjens I."/>
            <person name="Vanstreels E."/>
            <person name="Rieger M."/>
            <person name="Schaefer M."/>
            <person name="Mueller-Auer S."/>
            <person name="Gabel C."/>
            <person name="Fuchs M."/>
            <person name="Duesterhoeft A."/>
            <person name="Fritzc C."/>
            <person name="Holzer E."/>
            <person name="Moestl D."/>
            <person name="Hilbert H."/>
            <person name="Borzym K."/>
            <person name="Langer I."/>
            <person name="Beck A."/>
            <person name="Lehrach H."/>
            <person name="Reinhardt R."/>
            <person name="Pohl T.M."/>
            <person name="Eger P."/>
            <person name="Zimmermann W."/>
            <person name="Wedler H."/>
            <person name="Wambutt R."/>
            <person name="Purnelle B."/>
            <person name="Goffeau A."/>
            <person name="Cadieu E."/>
            <person name="Dreano S."/>
            <person name="Gloux S."/>
            <person name="Lelaure V."/>
            <person name="Mottier S."/>
            <person name="Galibert F."/>
            <person name="Aves S.J."/>
            <person name="Xiang Z."/>
            <person name="Hunt C."/>
            <person name="Moore K."/>
            <person name="Hurst S.M."/>
            <person name="Lucas M."/>
            <person name="Rochet M."/>
            <person name="Gaillardin C."/>
            <person name="Tallada V.A."/>
            <person name="Garzon A."/>
            <person name="Thode G."/>
            <person name="Daga R.R."/>
            <person name="Cruzado L."/>
            <person name="Jimenez J."/>
            <person name="Sanchez M."/>
            <person name="del Rey F."/>
            <person name="Benito J."/>
            <person name="Dominguez A."/>
            <person name="Revuelta J.L."/>
            <person name="Moreno S."/>
            <person name="Armstrong J."/>
            <person name="Forsburg S.L."/>
            <person name="Cerutti L."/>
            <person name="Lowe T."/>
            <person name="McCombie W.R."/>
            <person name="Paulsen I."/>
            <person name="Potashkin J."/>
            <person name="Shpakovski G.V."/>
            <person name="Ussery D."/>
            <person name="Barrell B.G."/>
            <person name="Nurse P."/>
        </authorList>
    </citation>
    <scope>NUCLEOTIDE SEQUENCE [LARGE SCALE GENOMIC DNA]</scope>
    <source>
        <strain>972 / ATCC 24843</strain>
    </source>
</reference>
<reference key="2">
    <citation type="journal article" date="2006" name="Nat. Biotechnol.">
        <title>ORFeome cloning and global analysis of protein localization in the fission yeast Schizosaccharomyces pombe.</title>
        <authorList>
            <person name="Matsuyama A."/>
            <person name="Arai R."/>
            <person name="Yashiroda Y."/>
            <person name="Shirai A."/>
            <person name="Kamata A."/>
            <person name="Sekido S."/>
            <person name="Kobayashi Y."/>
            <person name="Hashimoto A."/>
            <person name="Hamamoto M."/>
            <person name="Hiraoka Y."/>
            <person name="Horinouchi S."/>
            <person name="Yoshida M."/>
        </authorList>
    </citation>
    <scope>SUBCELLULAR LOCATION [LARGE SCALE ANALYSIS]</scope>
</reference>